<proteinExistence type="inferred from homology"/>
<keyword id="KW-0233">DNA recombination</keyword>
<keyword id="KW-0238">DNA-binding</keyword>
<keyword id="KW-1185">Reference proteome</keyword>
<keyword id="KW-0804">Transcription</keyword>
<keyword id="KW-0805">Transcription regulation</keyword>
<keyword id="KW-0810">Translation regulation</keyword>
<name>IHFA_AFIC5</name>
<accession>B6JGR8</accession>
<accession>F8BX67</accession>
<organism>
    <name type="scientific">Afipia carboxidovorans (strain ATCC 49405 / DSM 1227 / KCTC 32145 / OM5)</name>
    <name type="common">Oligotropha carboxidovorans</name>
    <dbReference type="NCBI Taxonomy" id="504832"/>
    <lineage>
        <taxon>Bacteria</taxon>
        <taxon>Pseudomonadati</taxon>
        <taxon>Pseudomonadota</taxon>
        <taxon>Alphaproteobacteria</taxon>
        <taxon>Hyphomicrobiales</taxon>
        <taxon>Nitrobacteraceae</taxon>
        <taxon>Afipia</taxon>
    </lineage>
</organism>
<feature type="chain" id="PRO_1000122151" description="Integration host factor subunit alpha">
    <location>
        <begin position="1"/>
        <end position="114"/>
    </location>
</feature>
<comment type="function">
    <text evidence="1">This protein is one of the two subunits of integration host factor, a specific DNA-binding protein that functions in genetic recombination as well as in transcriptional and translational control.</text>
</comment>
<comment type="subunit">
    <text evidence="1">Heterodimer of an alpha and a beta chain.</text>
</comment>
<comment type="similarity">
    <text evidence="1">Belongs to the bacterial histone-like protein family.</text>
</comment>
<evidence type="ECO:0000255" key="1">
    <source>
        <dbReference type="HAMAP-Rule" id="MF_00380"/>
    </source>
</evidence>
<gene>
    <name evidence="1" type="primary">ihfA</name>
    <name evidence="1" type="synonym">himA</name>
    <name type="ordered locus">OCAR_5877</name>
    <name type="ordered locus">OCA5_c21410</name>
</gene>
<protein>
    <recommendedName>
        <fullName evidence="1">Integration host factor subunit alpha</fullName>
        <shortName evidence="1">IHF-alpha</shortName>
    </recommendedName>
</protein>
<sequence length="114" mass="12286">MSESGKTVTRVDLCEAVYQKVGLSRTESAAFVELVLKEITDCLEKGETVKLSSFGSFMVRKKGERIGRNPKTGTEVPISPRRVMVFKPSAILKQRINNGAAAKTNGDVAKVAAG</sequence>
<reference key="1">
    <citation type="journal article" date="2008" name="J. Bacteriol.">
        <title>Genome sequence of the chemolithoautotrophic bacterium Oligotropha carboxidovorans OM5T.</title>
        <authorList>
            <person name="Paul D."/>
            <person name="Bridges S."/>
            <person name="Burgess S.C."/>
            <person name="Dandass Y."/>
            <person name="Lawrence M.L."/>
        </authorList>
    </citation>
    <scope>NUCLEOTIDE SEQUENCE [LARGE SCALE GENOMIC DNA]</scope>
    <source>
        <strain>ATCC 49405 / DSM 1227 / KCTC 32145 / OM5</strain>
    </source>
</reference>
<reference key="2">
    <citation type="journal article" date="2011" name="J. Bacteriol.">
        <title>Complete genome sequences of the chemolithoautotrophic Oligotropha carboxidovorans strains OM4 and OM5.</title>
        <authorList>
            <person name="Volland S."/>
            <person name="Rachinger M."/>
            <person name="Strittmatter A."/>
            <person name="Daniel R."/>
            <person name="Gottschalk G."/>
            <person name="Meyer O."/>
        </authorList>
    </citation>
    <scope>NUCLEOTIDE SEQUENCE [LARGE SCALE GENOMIC DNA]</scope>
    <source>
        <strain>ATCC 49405 / DSM 1227 / KCTC 32145 / OM5</strain>
    </source>
</reference>
<dbReference type="EMBL" id="CP001196">
    <property type="protein sequence ID" value="ACI93002.1"/>
    <property type="molecule type" value="Genomic_DNA"/>
</dbReference>
<dbReference type="EMBL" id="CP002826">
    <property type="protein sequence ID" value="AEI06844.1"/>
    <property type="molecule type" value="Genomic_DNA"/>
</dbReference>
<dbReference type="RefSeq" id="WP_012563029.1">
    <property type="nucleotide sequence ID" value="NC_015684.1"/>
</dbReference>
<dbReference type="SMR" id="B6JGR8"/>
<dbReference type="STRING" id="504832.OCA5_c21410"/>
<dbReference type="KEGG" id="oca:OCAR_5877"/>
<dbReference type="KEGG" id="ocg:OCA5_c21410"/>
<dbReference type="PATRIC" id="fig|504832.7.peg.2262"/>
<dbReference type="eggNOG" id="COG0776">
    <property type="taxonomic scope" value="Bacteria"/>
</dbReference>
<dbReference type="HOGENOM" id="CLU_105066_1_1_5"/>
<dbReference type="OrthoDB" id="9797747at2"/>
<dbReference type="Proteomes" id="UP000007730">
    <property type="component" value="Chromosome"/>
</dbReference>
<dbReference type="GO" id="GO:0005829">
    <property type="term" value="C:cytosol"/>
    <property type="evidence" value="ECO:0007669"/>
    <property type="project" value="TreeGrafter"/>
</dbReference>
<dbReference type="GO" id="GO:0003677">
    <property type="term" value="F:DNA binding"/>
    <property type="evidence" value="ECO:0007669"/>
    <property type="project" value="UniProtKB-UniRule"/>
</dbReference>
<dbReference type="GO" id="GO:0030527">
    <property type="term" value="F:structural constituent of chromatin"/>
    <property type="evidence" value="ECO:0007669"/>
    <property type="project" value="InterPro"/>
</dbReference>
<dbReference type="GO" id="GO:0006310">
    <property type="term" value="P:DNA recombination"/>
    <property type="evidence" value="ECO:0007669"/>
    <property type="project" value="UniProtKB-UniRule"/>
</dbReference>
<dbReference type="GO" id="GO:0009893">
    <property type="term" value="P:positive regulation of metabolic process"/>
    <property type="evidence" value="ECO:0007669"/>
    <property type="project" value="UniProtKB-ARBA"/>
</dbReference>
<dbReference type="GO" id="GO:0006355">
    <property type="term" value="P:regulation of DNA-templated transcription"/>
    <property type="evidence" value="ECO:0007669"/>
    <property type="project" value="UniProtKB-UniRule"/>
</dbReference>
<dbReference type="GO" id="GO:0006417">
    <property type="term" value="P:regulation of translation"/>
    <property type="evidence" value="ECO:0007669"/>
    <property type="project" value="UniProtKB-UniRule"/>
</dbReference>
<dbReference type="CDD" id="cd13835">
    <property type="entry name" value="IHF_A"/>
    <property type="match status" value="1"/>
</dbReference>
<dbReference type="FunFam" id="4.10.520.10:FF:000010">
    <property type="entry name" value="Integration host factor subunit alpha"/>
    <property type="match status" value="1"/>
</dbReference>
<dbReference type="Gene3D" id="4.10.520.10">
    <property type="entry name" value="IHF-like DNA-binding proteins"/>
    <property type="match status" value="1"/>
</dbReference>
<dbReference type="HAMAP" id="MF_00380">
    <property type="entry name" value="IHF_alpha"/>
    <property type="match status" value="1"/>
</dbReference>
<dbReference type="InterPro" id="IPR000119">
    <property type="entry name" value="Hist_DNA-bd"/>
</dbReference>
<dbReference type="InterPro" id="IPR020816">
    <property type="entry name" value="Histone-like_DNA-bd_CS"/>
</dbReference>
<dbReference type="InterPro" id="IPR010992">
    <property type="entry name" value="IHF-like_DNA-bd_dom_sf"/>
</dbReference>
<dbReference type="InterPro" id="IPR005684">
    <property type="entry name" value="IHF_alpha"/>
</dbReference>
<dbReference type="NCBIfam" id="TIGR00987">
    <property type="entry name" value="himA"/>
    <property type="match status" value="1"/>
</dbReference>
<dbReference type="NCBIfam" id="NF001401">
    <property type="entry name" value="PRK00285.1"/>
    <property type="match status" value="1"/>
</dbReference>
<dbReference type="PANTHER" id="PTHR33175">
    <property type="entry name" value="DNA-BINDING PROTEIN HU"/>
    <property type="match status" value="1"/>
</dbReference>
<dbReference type="PANTHER" id="PTHR33175:SF2">
    <property type="entry name" value="INTEGRATION HOST FACTOR SUBUNIT ALPHA"/>
    <property type="match status" value="1"/>
</dbReference>
<dbReference type="Pfam" id="PF00216">
    <property type="entry name" value="Bac_DNA_binding"/>
    <property type="match status" value="1"/>
</dbReference>
<dbReference type="PRINTS" id="PR01727">
    <property type="entry name" value="DNABINDINGHU"/>
</dbReference>
<dbReference type="SMART" id="SM00411">
    <property type="entry name" value="BHL"/>
    <property type="match status" value="1"/>
</dbReference>
<dbReference type="SUPFAM" id="SSF47729">
    <property type="entry name" value="IHF-like DNA-binding proteins"/>
    <property type="match status" value="1"/>
</dbReference>
<dbReference type="PROSITE" id="PS00045">
    <property type="entry name" value="HISTONE_LIKE"/>
    <property type="match status" value="1"/>
</dbReference>